<reference key="1">
    <citation type="submission" date="2008-06" db="EMBL/GenBank/DDBJ databases">
        <title>Complete sequence of Chloroherpeton thalassium ATCC 35110.</title>
        <authorList>
            <consortium name="US DOE Joint Genome Institute"/>
            <person name="Lucas S."/>
            <person name="Copeland A."/>
            <person name="Lapidus A."/>
            <person name="Glavina del Rio T."/>
            <person name="Dalin E."/>
            <person name="Tice H."/>
            <person name="Bruce D."/>
            <person name="Goodwin L."/>
            <person name="Pitluck S."/>
            <person name="Schmutz J."/>
            <person name="Larimer F."/>
            <person name="Land M."/>
            <person name="Hauser L."/>
            <person name="Kyrpides N."/>
            <person name="Mikhailova N."/>
            <person name="Liu Z."/>
            <person name="Li T."/>
            <person name="Zhao F."/>
            <person name="Overmann J."/>
            <person name="Bryant D.A."/>
            <person name="Richardson P."/>
        </authorList>
    </citation>
    <scope>NUCLEOTIDE SEQUENCE [LARGE SCALE GENOMIC DNA]</scope>
    <source>
        <strain>ATCC 35110 / GB-78</strain>
    </source>
</reference>
<gene>
    <name evidence="1" type="primary">folD</name>
    <name type="ordered locus">Ctha_0449</name>
</gene>
<comment type="function">
    <text evidence="1">Catalyzes the oxidation of 5,10-methylenetetrahydrofolate to 5,10-methenyltetrahydrofolate and then the hydrolysis of 5,10-methenyltetrahydrofolate to 10-formyltetrahydrofolate.</text>
</comment>
<comment type="catalytic activity">
    <reaction evidence="1">
        <text>(6R)-5,10-methylene-5,6,7,8-tetrahydrofolate + NADP(+) = (6R)-5,10-methenyltetrahydrofolate + NADPH</text>
        <dbReference type="Rhea" id="RHEA:22812"/>
        <dbReference type="ChEBI" id="CHEBI:15636"/>
        <dbReference type="ChEBI" id="CHEBI:57455"/>
        <dbReference type="ChEBI" id="CHEBI:57783"/>
        <dbReference type="ChEBI" id="CHEBI:58349"/>
        <dbReference type="EC" id="1.5.1.5"/>
    </reaction>
</comment>
<comment type="catalytic activity">
    <reaction evidence="1">
        <text>(6R)-5,10-methenyltetrahydrofolate + H2O = (6R)-10-formyltetrahydrofolate + H(+)</text>
        <dbReference type="Rhea" id="RHEA:23700"/>
        <dbReference type="ChEBI" id="CHEBI:15377"/>
        <dbReference type="ChEBI" id="CHEBI:15378"/>
        <dbReference type="ChEBI" id="CHEBI:57455"/>
        <dbReference type="ChEBI" id="CHEBI:195366"/>
        <dbReference type="EC" id="3.5.4.9"/>
    </reaction>
</comment>
<comment type="pathway">
    <text evidence="1">One-carbon metabolism; tetrahydrofolate interconversion.</text>
</comment>
<comment type="subunit">
    <text evidence="1">Homodimer.</text>
</comment>
<comment type="similarity">
    <text evidence="1">Belongs to the tetrahydrofolate dehydrogenase/cyclohydrolase family.</text>
</comment>
<accession>B3QUL4</accession>
<keyword id="KW-0028">Amino-acid biosynthesis</keyword>
<keyword id="KW-0368">Histidine biosynthesis</keyword>
<keyword id="KW-0378">Hydrolase</keyword>
<keyword id="KW-0486">Methionine biosynthesis</keyword>
<keyword id="KW-0511">Multifunctional enzyme</keyword>
<keyword id="KW-0521">NADP</keyword>
<keyword id="KW-0554">One-carbon metabolism</keyword>
<keyword id="KW-0560">Oxidoreductase</keyword>
<keyword id="KW-0658">Purine biosynthesis</keyword>
<keyword id="KW-1185">Reference proteome</keyword>
<organism>
    <name type="scientific">Chloroherpeton thalassium (strain ATCC 35110 / GB-78)</name>
    <dbReference type="NCBI Taxonomy" id="517418"/>
    <lineage>
        <taxon>Bacteria</taxon>
        <taxon>Pseudomonadati</taxon>
        <taxon>Chlorobiota</taxon>
        <taxon>Chlorobiia</taxon>
        <taxon>Chlorobiales</taxon>
        <taxon>Chloroherpetonaceae</taxon>
        <taxon>Chloroherpeton</taxon>
    </lineage>
</organism>
<dbReference type="EC" id="1.5.1.5" evidence="1"/>
<dbReference type="EC" id="3.5.4.9" evidence="1"/>
<dbReference type="EMBL" id="CP001100">
    <property type="protein sequence ID" value="ACF12920.1"/>
    <property type="molecule type" value="Genomic_DNA"/>
</dbReference>
<dbReference type="RefSeq" id="WP_012499004.1">
    <property type="nucleotide sequence ID" value="NC_011026.1"/>
</dbReference>
<dbReference type="SMR" id="B3QUL4"/>
<dbReference type="STRING" id="517418.Ctha_0449"/>
<dbReference type="KEGG" id="cts:Ctha_0449"/>
<dbReference type="eggNOG" id="COG0190">
    <property type="taxonomic scope" value="Bacteria"/>
</dbReference>
<dbReference type="HOGENOM" id="CLU_034045_2_1_10"/>
<dbReference type="OrthoDB" id="9803580at2"/>
<dbReference type="UniPathway" id="UPA00193"/>
<dbReference type="Proteomes" id="UP000001208">
    <property type="component" value="Chromosome"/>
</dbReference>
<dbReference type="GO" id="GO:0005829">
    <property type="term" value="C:cytosol"/>
    <property type="evidence" value="ECO:0007669"/>
    <property type="project" value="TreeGrafter"/>
</dbReference>
<dbReference type="GO" id="GO:0004477">
    <property type="term" value="F:methenyltetrahydrofolate cyclohydrolase activity"/>
    <property type="evidence" value="ECO:0007669"/>
    <property type="project" value="UniProtKB-UniRule"/>
</dbReference>
<dbReference type="GO" id="GO:0004488">
    <property type="term" value="F:methylenetetrahydrofolate dehydrogenase (NADP+) activity"/>
    <property type="evidence" value="ECO:0007669"/>
    <property type="project" value="UniProtKB-UniRule"/>
</dbReference>
<dbReference type="GO" id="GO:0000105">
    <property type="term" value="P:L-histidine biosynthetic process"/>
    <property type="evidence" value="ECO:0007669"/>
    <property type="project" value="UniProtKB-KW"/>
</dbReference>
<dbReference type="GO" id="GO:0009086">
    <property type="term" value="P:methionine biosynthetic process"/>
    <property type="evidence" value="ECO:0007669"/>
    <property type="project" value="UniProtKB-KW"/>
</dbReference>
<dbReference type="GO" id="GO:0006164">
    <property type="term" value="P:purine nucleotide biosynthetic process"/>
    <property type="evidence" value="ECO:0007669"/>
    <property type="project" value="UniProtKB-KW"/>
</dbReference>
<dbReference type="GO" id="GO:0035999">
    <property type="term" value="P:tetrahydrofolate interconversion"/>
    <property type="evidence" value="ECO:0007669"/>
    <property type="project" value="UniProtKB-UniRule"/>
</dbReference>
<dbReference type="CDD" id="cd01080">
    <property type="entry name" value="NAD_bind_m-THF_DH_Cyclohyd"/>
    <property type="match status" value="1"/>
</dbReference>
<dbReference type="FunFam" id="3.40.50.10860:FF:000001">
    <property type="entry name" value="Bifunctional protein FolD"/>
    <property type="match status" value="1"/>
</dbReference>
<dbReference type="FunFam" id="3.40.50.720:FF:000189">
    <property type="entry name" value="Bifunctional protein FolD"/>
    <property type="match status" value="1"/>
</dbReference>
<dbReference type="Gene3D" id="3.40.50.10860">
    <property type="entry name" value="Leucine Dehydrogenase, chain A, domain 1"/>
    <property type="match status" value="1"/>
</dbReference>
<dbReference type="Gene3D" id="3.40.50.720">
    <property type="entry name" value="NAD(P)-binding Rossmann-like Domain"/>
    <property type="match status" value="1"/>
</dbReference>
<dbReference type="HAMAP" id="MF_01576">
    <property type="entry name" value="THF_DHG_CYH"/>
    <property type="match status" value="1"/>
</dbReference>
<dbReference type="InterPro" id="IPR046346">
    <property type="entry name" value="Aminoacid_DH-like_N_sf"/>
</dbReference>
<dbReference type="InterPro" id="IPR036291">
    <property type="entry name" value="NAD(P)-bd_dom_sf"/>
</dbReference>
<dbReference type="InterPro" id="IPR000672">
    <property type="entry name" value="THF_DH/CycHdrlase"/>
</dbReference>
<dbReference type="InterPro" id="IPR020630">
    <property type="entry name" value="THF_DH/CycHdrlase_cat_dom"/>
</dbReference>
<dbReference type="InterPro" id="IPR020867">
    <property type="entry name" value="THF_DH/CycHdrlase_CS"/>
</dbReference>
<dbReference type="InterPro" id="IPR020631">
    <property type="entry name" value="THF_DH/CycHdrlase_NAD-bd_dom"/>
</dbReference>
<dbReference type="NCBIfam" id="NF008058">
    <property type="entry name" value="PRK10792.1"/>
    <property type="match status" value="1"/>
</dbReference>
<dbReference type="NCBIfam" id="NF010771">
    <property type="entry name" value="PRK14174.1"/>
    <property type="match status" value="1"/>
</dbReference>
<dbReference type="NCBIfam" id="NF010783">
    <property type="entry name" value="PRK14186.1"/>
    <property type="match status" value="1"/>
</dbReference>
<dbReference type="PANTHER" id="PTHR48099:SF5">
    <property type="entry name" value="C-1-TETRAHYDROFOLATE SYNTHASE, CYTOPLASMIC"/>
    <property type="match status" value="1"/>
</dbReference>
<dbReference type="PANTHER" id="PTHR48099">
    <property type="entry name" value="C-1-TETRAHYDROFOLATE SYNTHASE, CYTOPLASMIC-RELATED"/>
    <property type="match status" value="1"/>
</dbReference>
<dbReference type="Pfam" id="PF00763">
    <property type="entry name" value="THF_DHG_CYH"/>
    <property type="match status" value="1"/>
</dbReference>
<dbReference type="Pfam" id="PF02882">
    <property type="entry name" value="THF_DHG_CYH_C"/>
    <property type="match status" value="1"/>
</dbReference>
<dbReference type="PRINTS" id="PR00085">
    <property type="entry name" value="THFDHDRGNASE"/>
</dbReference>
<dbReference type="SUPFAM" id="SSF53223">
    <property type="entry name" value="Aminoacid dehydrogenase-like, N-terminal domain"/>
    <property type="match status" value="1"/>
</dbReference>
<dbReference type="SUPFAM" id="SSF51735">
    <property type="entry name" value="NAD(P)-binding Rossmann-fold domains"/>
    <property type="match status" value="1"/>
</dbReference>
<dbReference type="PROSITE" id="PS00767">
    <property type="entry name" value="THF_DHG_CYH_2"/>
    <property type="match status" value="1"/>
</dbReference>
<proteinExistence type="inferred from homology"/>
<sequence length="294" mass="31845">MVVLDGKKLSQEIKAELKTKVEQYKQEIQKVPGLTVIIVGEDPASQVYVRNKAKSCNEIGMASEVIELPASTSQEELLKKIADLNHNPNVHGILVQQPLPKHIDEFAVTLAIAPEKDVDGFHPENVGRLVLGHLDKCFVSCTPFGIIEILKRYNIETKGKHCVIVGRSNIVGKPMANLMVQKLAYMNCTVTVCHSATPDIATYTKQADILIAAIGKARFITGDMIKAGAVVIDVGINRIEATNTKSGYRLVGDVDFEAASQKASAITPVPGGVGPMTISMLLANTMKSFEHFLA</sequence>
<name>FOLD_CHLT3</name>
<protein>
    <recommendedName>
        <fullName evidence="1">Bifunctional protein FolD</fullName>
    </recommendedName>
    <domain>
        <recommendedName>
            <fullName evidence="1">Methylenetetrahydrofolate dehydrogenase</fullName>
            <ecNumber evidence="1">1.5.1.5</ecNumber>
        </recommendedName>
    </domain>
    <domain>
        <recommendedName>
            <fullName evidence="1">Methenyltetrahydrofolate cyclohydrolase</fullName>
            <ecNumber evidence="1">3.5.4.9</ecNumber>
        </recommendedName>
    </domain>
</protein>
<evidence type="ECO:0000255" key="1">
    <source>
        <dbReference type="HAMAP-Rule" id="MF_01576"/>
    </source>
</evidence>
<feature type="chain" id="PRO_1000147454" description="Bifunctional protein FolD">
    <location>
        <begin position="1"/>
        <end position="294"/>
    </location>
</feature>
<feature type="binding site" evidence="1">
    <location>
        <begin position="166"/>
        <end position="168"/>
    </location>
    <ligand>
        <name>NADP(+)</name>
        <dbReference type="ChEBI" id="CHEBI:58349"/>
    </ligand>
</feature>
<feature type="binding site" evidence="1">
    <location>
        <position position="195"/>
    </location>
    <ligand>
        <name>NADP(+)</name>
        <dbReference type="ChEBI" id="CHEBI:58349"/>
    </ligand>
</feature>
<feature type="binding site" evidence="1">
    <location>
        <position position="236"/>
    </location>
    <ligand>
        <name>NADP(+)</name>
        <dbReference type="ChEBI" id="CHEBI:58349"/>
    </ligand>
</feature>